<name>TRAF6_BOVIN</name>
<accession>Q3ZCC3</accession>
<evidence type="ECO:0000250" key="1"/>
<evidence type="ECO:0000250" key="2">
    <source>
        <dbReference type="UniProtKB" id="P70196"/>
    </source>
</evidence>
<evidence type="ECO:0000250" key="3">
    <source>
        <dbReference type="UniProtKB" id="Q9Y4K3"/>
    </source>
</evidence>
<evidence type="ECO:0000255" key="4"/>
<evidence type="ECO:0000255" key="5">
    <source>
        <dbReference type="PROSITE-ProRule" id="PRU00129"/>
    </source>
</evidence>
<evidence type="ECO:0000255" key="6">
    <source>
        <dbReference type="PROSITE-ProRule" id="PRU00175"/>
    </source>
</evidence>
<evidence type="ECO:0000255" key="7">
    <source>
        <dbReference type="PROSITE-ProRule" id="PRU00207"/>
    </source>
</evidence>
<evidence type="ECO:0000305" key="8"/>
<keyword id="KW-0175">Coiled coil</keyword>
<keyword id="KW-0963">Cytoplasm</keyword>
<keyword id="KW-0227">DNA damage</keyword>
<keyword id="KW-0391">Immunity</keyword>
<keyword id="KW-1017">Isopeptide bond</keyword>
<keyword id="KW-0551">Lipid droplet</keyword>
<keyword id="KW-0479">Metal-binding</keyword>
<keyword id="KW-0539">Nucleus</keyword>
<keyword id="KW-0987">Osteopetrosis</keyword>
<keyword id="KW-1185">Reference proteome</keyword>
<keyword id="KW-0677">Repeat</keyword>
<keyword id="KW-0808">Transferase</keyword>
<keyword id="KW-0832">Ubl conjugation</keyword>
<keyword id="KW-0833">Ubl conjugation pathway</keyword>
<keyword id="KW-0862">Zinc</keyword>
<keyword id="KW-0863">Zinc-finger</keyword>
<protein>
    <recommendedName>
        <fullName>TNF receptor-associated factor 6</fullName>
        <ecNumber evidence="3">2.3.2.27</ecNumber>
    </recommendedName>
    <alternativeName>
        <fullName>E3 ubiquitin-protein ligase TRAF6</fullName>
    </alternativeName>
    <alternativeName>
        <fullName evidence="8">RING-type E3 ubiquitin transferase TRAF6</fullName>
    </alternativeName>
</protein>
<dbReference type="EC" id="2.3.2.27" evidence="3"/>
<dbReference type="EMBL" id="DQ319074">
    <property type="protein sequence ID" value="ABC47877.1"/>
    <property type="molecule type" value="mRNA"/>
</dbReference>
<dbReference type="EMBL" id="DQ407276">
    <property type="protein sequence ID" value="ABD72516.1"/>
    <property type="molecule type" value="mRNA"/>
</dbReference>
<dbReference type="EMBL" id="BC102522">
    <property type="protein sequence ID" value="AAI02523.1"/>
    <property type="molecule type" value="mRNA"/>
</dbReference>
<dbReference type="RefSeq" id="NP_001029833.1">
    <property type="nucleotide sequence ID" value="NM_001034661.2"/>
</dbReference>
<dbReference type="RefSeq" id="XP_005216441.1">
    <property type="nucleotide sequence ID" value="XM_005216384.5"/>
</dbReference>
<dbReference type="RefSeq" id="XP_005216442.1">
    <property type="nucleotide sequence ID" value="XM_005216385.5"/>
</dbReference>
<dbReference type="BMRB" id="Q3ZCC3"/>
<dbReference type="SMR" id="Q3ZCC3"/>
<dbReference type="FunCoup" id="Q3ZCC3">
    <property type="interactions" value="3802"/>
</dbReference>
<dbReference type="STRING" id="9913.ENSBTAP00000021630"/>
<dbReference type="PaxDb" id="9913-ENSBTAP00000021630"/>
<dbReference type="Ensembl" id="ENSBTAT00000021630.5">
    <property type="protein sequence ID" value="ENSBTAP00000021630.4"/>
    <property type="gene ID" value="ENSBTAG00000036009.3"/>
</dbReference>
<dbReference type="GeneID" id="539124"/>
<dbReference type="KEGG" id="bta:539124"/>
<dbReference type="CTD" id="7189"/>
<dbReference type="VEuPathDB" id="HostDB:ENSBTAG00000036009"/>
<dbReference type="VGNC" id="VGNC:36278">
    <property type="gene designation" value="TRAF6"/>
</dbReference>
<dbReference type="eggNOG" id="KOG0297">
    <property type="taxonomic scope" value="Eukaryota"/>
</dbReference>
<dbReference type="GeneTree" id="ENSGT00940000155426"/>
<dbReference type="HOGENOM" id="CLU_021061_5_0_1"/>
<dbReference type="InParanoid" id="Q3ZCC3"/>
<dbReference type="OMA" id="FMHLQAL"/>
<dbReference type="OrthoDB" id="6475149at2759"/>
<dbReference type="TreeFam" id="TF321154"/>
<dbReference type="Reactome" id="R-BTA-1257604">
    <property type="pathway name" value="PIP3 activates AKT signaling"/>
</dbReference>
<dbReference type="Reactome" id="R-BTA-166058">
    <property type="pathway name" value="MyD88:MAL(TIRAP) cascade initiated on plasma membrane"/>
</dbReference>
<dbReference type="Reactome" id="R-BTA-193692">
    <property type="pathway name" value="Regulated proteolysis of p75NTR"/>
</dbReference>
<dbReference type="Reactome" id="R-BTA-202424">
    <property type="pathway name" value="Downstream TCR signaling"/>
</dbReference>
<dbReference type="Reactome" id="R-BTA-205043">
    <property type="pathway name" value="NRIF signals cell death from the nucleus"/>
</dbReference>
<dbReference type="Reactome" id="R-BTA-209543">
    <property type="pathway name" value="p75NTR recruits signalling complexes"/>
</dbReference>
<dbReference type="Reactome" id="R-BTA-209560">
    <property type="pathway name" value="NF-kB is activated and signals survival"/>
</dbReference>
<dbReference type="Reactome" id="R-BTA-2871837">
    <property type="pathway name" value="FCERI mediated NF-kB activation"/>
</dbReference>
<dbReference type="Reactome" id="R-BTA-450302">
    <property type="pathway name" value="activated TAK1 mediates p38 MAPK activation"/>
</dbReference>
<dbReference type="Reactome" id="R-BTA-450321">
    <property type="pathway name" value="JNK (c-Jun kinases) phosphorylation and activation mediated by activated human TAK1"/>
</dbReference>
<dbReference type="Reactome" id="R-BTA-5607764">
    <property type="pathway name" value="CLEC7A (Dectin-1) signaling"/>
</dbReference>
<dbReference type="Reactome" id="R-BTA-5689880">
    <property type="pathway name" value="Ub-specific processing proteases"/>
</dbReference>
<dbReference type="Reactome" id="R-BTA-5689896">
    <property type="pathway name" value="Ovarian tumor domain proteases"/>
</dbReference>
<dbReference type="Reactome" id="R-BTA-6811558">
    <property type="pathway name" value="PI5P, PP2A and IER3 Regulate PI3K/AKT Signaling"/>
</dbReference>
<dbReference type="Reactome" id="R-BTA-9020702">
    <property type="pathway name" value="Interleukin-1 signaling"/>
</dbReference>
<dbReference type="Reactome" id="R-BTA-937039">
    <property type="pathway name" value="IRAK1 recruits IKK complex"/>
</dbReference>
<dbReference type="Reactome" id="R-BTA-937042">
    <property type="pathway name" value="IRAK2 mediated activation of TAK1 complex"/>
</dbReference>
<dbReference type="Reactome" id="R-BTA-937072">
    <property type="pathway name" value="TRAF6-mediated induction of TAK1 complex within TLR4 complex"/>
</dbReference>
<dbReference type="Reactome" id="R-BTA-9645460">
    <property type="pathway name" value="Alpha-protein kinase 1 signaling pathway"/>
</dbReference>
<dbReference type="Reactome" id="R-BTA-975138">
    <property type="pathway name" value="TRAF6 mediated induction of NFkB and MAP kinases upon TLR7/8 or 9 activation"/>
</dbReference>
<dbReference type="Reactome" id="R-BTA-975144">
    <property type="pathway name" value="IRAK1 recruits IKK complex upon TLR7/8 or 9 stimulation"/>
</dbReference>
<dbReference type="Reactome" id="R-BTA-975163">
    <property type="pathway name" value="IRAK2 mediated activation of TAK1 complex upon TLR7/8 or 9 stimulation"/>
</dbReference>
<dbReference type="Reactome" id="R-BTA-9758274">
    <property type="pathway name" value="Regulation of NF-kappa B signaling"/>
</dbReference>
<dbReference type="Reactome" id="R-BTA-975871">
    <property type="pathway name" value="MyD88 cascade initiated on plasma membrane"/>
</dbReference>
<dbReference type="UniPathway" id="UPA00143"/>
<dbReference type="Proteomes" id="UP000009136">
    <property type="component" value="Chromosome 15"/>
</dbReference>
<dbReference type="Bgee" id="ENSBTAG00000036009">
    <property type="expression patterns" value="Expressed in oocyte and 104 other cell types or tissues"/>
</dbReference>
<dbReference type="GO" id="GO:0035631">
    <property type="term" value="C:CD40 receptor complex"/>
    <property type="evidence" value="ECO:0007669"/>
    <property type="project" value="Ensembl"/>
</dbReference>
<dbReference type="GO" id="GO:0005938">
    <property type="term" value="C:cell cortex"/>
    <property type="evidence" value="ECO:0007669"/>
    <property type="project" value="UniProtKB-SubCell"/>
</dbReference>
<dbReference type="GO" id="GO:0005737">
    <property type="term" value="C:cytoplasm"/>
    <property type="evidence" value="ECO:0000318"/>
    <property type="project" value="GO_Central"/>
</dbReference>
<dbReference type="GO" id="GO:0009898">
    <property type="term" value="C:cytoplasmic side of plasma membrane"/>
    <property type="evidence" value="ECO:0000318"/>
    <property type="project" value="GO_Central"/>
</dbReference>
<dbReference type="GO" id="GO:0005829">
    <property type="term" value="C:cytosol"/>
    <property type="evidence" value="ECO:0007669"/>
    <property type="project" value="Ensembl"/>
</dbReference>
<dbReference type="GO" id="GO:0098978">
    <property type="term" value="C:glutamatergic synapse"/>
    <property type="evidence" value="ECO:0000318"/>
    <property type="project" value="GO_Central"/>
</dbReference>
<dbReference type="GO" id="GO:0005811">
    <property type="term" value="C:lipid droplet"/>
    <property type="evidence" value="ECO:0000250"/>
    <property type="project" value="UniProtKB"/>
</dbReference>
<dbReference type="GO" id="GO:0005634">
    <property type="term" value="C:nucleus"/>
    <property type="evidence" value="ECO:0007669"/>
    <property type="project" value="UniProtKB-SubCell"/>
</dbReference>
<dbReference type="GO" id="GO:0048471">
    <property type="term" value="C:perinuclear region of cytoplasm"/>
    <property type="evidence" value="ECO:0007669"/>
    <property type="project" value="Ensembl"/>
</dbReference>
<dbReference type="GO" id="GO:0042826">
    <property type="term" value="F:histone deacetylase binding"/>
    <property type="evidence" value="ECO:0007669"/>
    <property type="project" value="Ensembl"/>
</dbReference>
<dbReference type="GO" id="GO:0042802">
    <property type="term" value="F:identical protein binding"/>
    <property type="evidence" value="ECO:0007669"/>
    <property type="project" value="Ensembl"/>
</dbReference>
<dbReference type="GO" id="GO:0043422">
    <property type="term" value="F:protein kinase B binding"/>
    <property type="evidence" value="ECO:0007669"/>
    <property type="project" value="Ensembl"/>
</dbReference>
<dbReference type="GO" id="GO:0035591">
    <property type="term" value="F:signaling adaptor activity"/>
    <property type="evidence" value="ECO:0000318"/>
    <property type="project" value="GO_Central"/>
</dbReference>
<dbReference type="GO" id="GO:0005164">
    <property type="term" value="F:tumor necrosis factor receptor binding"/>
    <property type="evidence" value="ECO:0007669"/>
    <property type="project" value="InterPro"/>
</dbReference>
<dbReference type="GO" id="GO:0031624">
    <property type="term" value="F:ubiquitin conjugating enzyme binding"/>
    <property type="evidence" value="ECO:0007669"/>
    <property type="project" value="Ensembl"/>
</dbReference>
<dbReference type="GO" id="GO:0061630">
    <property type="term" value="F:ubiquitin protein ligase activity"/>
    <property type="evidence" value="ECO:0000318"/>
    <property type="project" value="GO_Central"/>
</dbReference>
<dbReference type="GO" id="GO:0004842">
    <property type="term" value="F:ubiquitin-protein transferase activity"/>
    <property type="evidence" value="ECO:0000250"/>
    <property type="project" value="UniProtKB"/>
</dbReference>
<dbReference type="GO" id="GO:0034450">
    <property type="term" value="F:ubiquitin-ubiquitin ligase activity"/>
    <property type="evidence" value="ECO:0007669"/>
    <property type="project" value="Ensembl"/>
</dbReference>
<dbReference type="GO" id="GO:0008270">
    <property type="term" value="F:zinc ion binding"/>
    <property type="evidence" value="ECO:0007669"/>
    <property type="project" value="UniProtKB-KW"/>
</dbReference>
<dbReference type="GO" id="GO:0019886">
    <property type="term" value="P:antigen processing and presentation of exogenous peptide antigen via MHC class II"/>
    <property type="evidence" value="ECO:0007669"/>
    <property type="project" value="Ensembl"/>
</dbReference>
<dbReference type="GO" id="GO:0140374">
    <property type="term" value="P:antiviral innate immune response"/>
    <property type="evidence" value="ECO:0007669"/>
    <property type="project" value="Ensembl"/>
</dbReference>
<dbReference type="GO" id="GO:0000045">
    <property type="term" value="P:autophagosome assembly"/>
    <property type="evidence" value="ECO:0007669"/>
    <property type="project" value="Ensembl"/>
</dbReference>
<dbReference type="GO" id="GO:0045453">
    <property type="term" value="P:bone resorption"/>
    <property type="evidence" value="ECO:0007669"/>
    <property type="project" value="Ensembl"/>
</dbReference>
<dbReference type="GO" id="GO:0007249">
    <property type="term" value="P:canonical NF-kappaB signal transduction"/>
    <property type="evidence" value="ECO:0007669"/>
    <property type="project" value="Ensembl"/>
</dbReference>
<dbReference type="GO" id="GO:0023035">
    <property type="term" value="P:CD40 signaling pathway"/>
    <property type="evidence" value="ECO:0007669"/>
    <property type="project" value="Ensembl"/>
</dbReference>
<dbReference type="GO" id="GO:0002753">
    <property type="term" value="P:cytoplasmic pattern recognition receptor signaling pathway"/>
    <property type="evidence" value="ECO:0007669"/>
    <property type="project" value="Ensembl"/>
</dbReference>
<dbReference type="GO" id="GO:0006974">
    <property type="term" value="P:DNA damage response"/>
    <property type="evidence" value="ECO:0007669"/>
    <property type="project" value="UniProtKB-KW"/>
</dbReference>
<dbReference type="GO" id="GO:0001701">
    <property type="term" value="P:in utero embryonic development"/>
    <property type="evidence" value="ECO:0007669"/>
    <property type="project" value="Ensembl"/>
</dbReference>
<dbReference type="GO" id="GO:0045087">
    <property type="term" value="P:innate immune response"/>
    <property type="evidence" value="ECO:0000318"/>
    <property type="project" value="GO_Central"/>
</dbReference>
<dbReference type="GO" id="GO:0070498">
    <property type="term" value="P:interleukin-1-mediated signaling pathway"/>
    <property type="evidence" value="ECO:0007669"/>
    <property type="project" value="Ensembl"/>
</dbReference>
<dbReference type="GO" id="GO:0097400">
    <property type="term" value="P:interleukin-17-mediated signaling pathway"/>
    <property type="evidence" value="ECO:0007669"/>
    <property type="project" value="Ensembl"/>
</dbReference>
<dbReference type="GO" id="GO:0038173">
    <property type="term" value="P:interleukin-17A-mediated signaling pathway"/>
    <property type="evidence" value="ECO:0007669"/>
    <property type="project" value="Ensembl"/>
</dbReference>
<dbReference type="GO" id="GO:0038172">
    <property type="term" value="P:interleukin-33-mediated signaling pathway"/>
    <property type="evidence" value="ECO:0007669"/>
    <property type="project" value="Ensembl"/>
</dbReference>
<dbReference type="GO" id="GO:0031663">
    <property type="term" value="P:lipopolysaccharide-mediated signaling pathway"/>
    <property type="evidence" value="ECO:0000318"/>
    <property type="project" value="GO_Central"/>
</dbReference>
<dbReference type="GO" id="GO:0043011">
    <property type="term" value="P:myeloid dendritic cell differentiation"/>
    <property type="evidence" value="ECO:0007669"/>
    <property type="project" value="Ensembl"/>
</dbReference>
<dbReference type="GO" id="GO:0000122">
    <property type="term" value="P:negative regulation of transcription by RNA polymerase II"/>
    <property type="evidence" value="ECO:0007669"/>
    <property type="project" value="Ensembl"/>
</dbReference>
<dbReference type="GO" id="GO:0001843">
    <property type="term" value="P:neural tube closure"/>
    <property type="evidence" value="ECO:0007669"/>
    <property type="project" value="Ensembl"/>
</dbReference>
<dbReference type="GO" id="GO:0038061">
    <property type="term" value="P:non-canonical NF-kappaB signal transduction"/>
    <property type="evidence" value="ECO:0007669"/>
    <property type="project" value="Ensembl"/>
</dbReference>
<dbReference type="GO" id="GO:0042475">
    <property type="term" value="P:odontogenesis of dentin-containing tooth"/>
    <property type="evidence" value="ECO:0007669"/>
    <property type="project" value="Ensembl"/>
</dbReference>
<dbReference type="GO" id="GO:0001503">
    <property type="term" value="P:ossification"/>
    <property type="evidence" value="ECO:0007669"/>
    <property type="project" value="Ensembl"/>
</dbReference>
<dbReference type="GO" id="GO:0030316">
    <property type="term" value="P:osteoclast differentiation"/>
    <property type="evidence" value="ECO:0007669"/>
    <property type="project" value="Ensembl"/>
</dbReference>
<dbReference type="GO" id="GO:0043123">
    <property type="term" value="P:positive regulation of canonical NF-kappaB signal transduction"/>
    <property type="evidence" value="ECO:0000250"/>
    <property type="project" value="UniProtKB"/>
</dbReference>
<dbReference type="GO" id="GO:0032735">
    <property type="term" value="P:positive regulation of interleukin-12 production"/>
    <property type="evidence" value="ECO:0007669"/>
    <property type="project" value="Ensembl"/>
</dbReference>
<dbReference type="GO" id="GO:0032743">
    <property type="term" value="P:positive regulation of interleukin-2 production"/>
    <property type="evidence" value="ECO:0007669"/>
    <property type="project" value="Ensembl"/>
</dbReference>
<dbReference type="GO" id="GO:0032755">
    <property type="term" value="P:positive regulation of interleukin-6 production"/>
    <property type="evidence" value="ECO:0007669"/>
    <property type="project" value="Ensembl"/>
</dbReference>
<dbReference type="GO" id="GO:0046330">
    <property type="term" value="P:positive regulation of JNK cascade"/>
    <property type="evidence" value="ECO:0007669"/>
    <property type="project" value="Ensembl"/>
</dbReference>
<dbReference type="GO" id="GO:1904996">
    <property type="term" value="P:positive regulation of leukocyte adhesion to vascular endothelial cell"/>
    <property type="evidence" value="ECO:0007669"/>
    <property type="project" value="Ensembl"/>
</dbReference>
<dbReference type="GO" id="GO:0031666">
    <property type="term" value="P:positive regulation of lipopolysaccharide-mediated signaling pathway"/>
    <property type="evidence" value="ECO:0007669"/>
    <property type="project" value="Ensembl"/>
</dbReference>
<dbReference type="GO" id="GO:0051092">
    <property type="term" value="P:positive regulation of NF-kappaB transcription factor activity"/>
    <property type="evidence" value="ECO:0000250"/>
    <property type="project" value="UniProtKB"/>
</dbReference>
<dbReference type="GO" id="GO:0045672">
    <property type="term" value="P:positive regulation of osteoclast differentiation"/>
    <property type="evidence" value="ECO:0007669"/>
    <property type="project" value="Ensembl"/>
</dbReference>
<dbReference type="GO" id="GO:0002726">
    <property type="term" value="P:positive regulation of T cell cytokine production"/>
    <property type="evidence" value="ECO:0007669"/>
    <property type="project" value="Ensembl"/>
</dbReference>
<dbReference type="GO" id="GO:0042102">
    <property type="term" value="P:positive regulation of T cell proliferation"/>
    <property type="evidence" value="ECO:0007669"/>
    <property type="project" value="Ensembl"/>
</dbReference>
<dbReference type="GO" id="GO:0045944">
    <property type="term" value="P:positive regulation of transcription by RNA polymerase II"/>
    <property type="evidence" value="ECO:0007669"/>
    <property type="project" value="Ensembl"/>
</dbReference>
<dbReference type="GO" id="GO:0032481">
    <property type="term" value="P:positive regulation of type I interferon production"/>
    <property type="evidence" value="ECO:0007669"/>
    <property type="project" value="Ensembl"/>
</dbReference>
<dbReference type="GO" id="GO:0051865">
    <property type="term" value="P:protein autoubiquitination"/>
    <property type="evidence" value="ECO:0007669"/>
    <property type="project" value="Ensembl"/>
</dbReference>
<dbReference type="GO" id="GO:0141198">
    <property type="term" value="P:protein branched polyubiquitination"/>
    <property type="evidence" value="ECO:0000250"/>
    <property type="project" value="UniProtKB"/>
</dbReference>
<dbReference type="GO" id="GO:0070534">
    <property type="term" value="P:protein K63-linked ubiquitination"/>
    <property type="evidence" value="ECO:0000250"/>
    <property type="project" value="UniProtKB"/>
</dbReference>
<dbReference type="GO" id="GO:0042981">
    <property type="term" value="P:regulation of apoptotic process"/>
    <property type="evidence" value="ECO:0007669"/>
    <property type="project" value="InterPro"/>
</dbReference>
<dbReference type="GO" id="GO:0043122">
    <property type="term" value="P:regulation of canonical NF-kappaB signal transduction"/>
    <property type="evidence" value="ECO:0000318"/>
    <property type="project" value="GO_Central"/>
</dbReference>
<dbReference type="GO" id="GO:0002637">
    <property type="term" value="P:regulation of immunoglobulin production"/>
    <property type="evidence" value="ECO:0007669"/>
    <property type="project" value="Ensembl"/>
</dbReference>
<dbReference type="GO" id="GO:0098696">
    <property type="term" value="P:regulation of neurotransmitter receptor localization to postsynaptic specialization membrane"/>
    <property type="evidence" value="ECO:0007669"/>
    <property type="project" value="Ensembl"/>
</dbReference>
<dbReference type="GO" id="GO:0050852">
    <property type="term" value="P:T cell receptor signaling pathway"/>
    <property type="evidence" value="ECO:0007669"/>
    <property type="project" value="Ensembl"/>
</dbReference>
<dbReference type="GO" id="GO:0042088">
    <property type="term" value="P:T-helper 1 type immune response"/>
    <property type="evidence" value="ECO:0007669"/>
    <property type="project" value="Ensembl"/>
</dbReference>
<dbReference type="GO" id="GO:0034142">
    <property type="term" value="P:toll-like receptor 4 signaling pathway"/>
    <property type="evidence" value="ECO:0007669"/>
    <property type="project" value="Ensembl"/>
</dbReference>
<dbReference type="GO" id="GO:0033209">
    <property type="term" value="P:tumor necrosis factor-mediated signaling pathway"/>
    <property type="evidence" value="ECO:0007669"/>
    <property type="project" value="Ensembl"/>
</dbReference>
<dbReference type="CDD" id="cd03776">
    <property type="entry name" value="MATH_TRAF6"/>
    <property type="match status" value="1"/>
</dbReference>
<dbReference type="CDD" id="cd16643">
    <property type="entry name" value="mRING-HC-C3HC3D_TRAF6"/>
    <property type="match status" value="1"/>
</dbReference>
<dbReference type="FunFam" id="2.60.210.10:FF:000010">
    <property type="entry name" value="TNF receptor-associated factor"/>
    <property type="match status" value="1"/>
</dbReference>
<dbReference type="FunFam" id="3.30.40.10:FF:000179">
    <property type="entry name" value="TNF receptor-associated factor"/>
    <property type="match status" value="1"/>
</dbReference>
<dbReference type="FunFam" id="3.30.40.10:FF:000211">
    <property type="entry name" value="TNF receptor-associated factor"/>
    <property type="match status" value="1"/>
</dbReference>
<dbReference type="FunFam" id="3.30.40.10:FF:000289">
    <property type="entry name" value="TNF receptor-associated factor"/>
    <property type="match status" value="1"/>
</dbReference>
<dbReference type="Gene3D" id="2.60.210.10">
    <property type="entry name" value="Apoptosis, Tumor Necrosis Factor Receptor Associated Protein 2, Chain A"/>
    <property type="match status" value="1"/>
</dbReference>
<dbReference type="Gene3D" id="3.30.40.10">
    <property type="entry name" value="Zinc/RING finger domain, C3HC4 (zinc finger)"/>
    <property type="match status" value="3"/>
</dbReference>
<dbReference type="InterPro" id="IPR002083">
    <property type="entry name" value="MATH/TRAF_dom"/>
</dbReference>
<dbReference type="InterPro" id="IPR012227">
    <property type="entry name" value="TNF_rcpt-assoc_TRAF_met"/>
</dbReference>
<dbReference type="InterPro" id="IPR008974">
    <property type="entry name" value="TRAF-like"/>
</dbReference>
<dbReference type="InterPro" id="IPR049342">
    <property type="entry name" value="TRAF1-6_MATH_dom"/>
</dbReference>
<dbReference type="InterPro" id="IPR037309">
    <property type="entry name" value="TRAF6_MATH"/>
</dbReference>
<dbReference type="InterPro" id="IPR027139">
    <property type="entry name" value="TRAF6_RING-HC"/>
</dbReference>
<dbReference type="InterPro" id="IPR041310">
    <property type="entry name" value="TRAF6_Z2"/>
</dbReference>
<dbReference type="InterPro" id="IPR001841">
    <property type="entry name" value="Znf_RING"/>
</dbReference>
<dbReference type="InterPro" id="IPR013083">
    <property type="entry name" value="Znf_RING/FYVE/PHD"/>
</dbReference>
<dbReference type="InterPro" id="IPR017907">
    <property type="entry name" value="Znf_RING_CS"/>
</dbReference>
<dbReference type="InterPro" id="IPR001293">
    <property type="entry name" value="Znf_TRAF"/>
</dbReference>
<dbReference type="PANTHER" id="PTHR10131">
    <property type="entry name" value="TNF RECEPTOR ASSOCIATED FACTOR"/>
    <property type="match status" value="1"/>
</dbReference>
<dbReference type="PANTHER" id="PTHR10131:SF152">
    <property type="entry name" value="TNF RECEPTOR-ASSOCIATED FACTOR 6"/>
    <property type="match status" value="1"/>
</dbReference>
<dbReference type="Pfam" id="PF21355">
    <property type="entry name" value="TRAF-mep_MATH"/>
    <property type="match status" value="1"/>
</dbReference>
<dbReference type="Pfam" id="PF18048">
    <property type="entry name" value="TRAF6_Z2"/>
    <property type="match status" value="1"/>
</dbReference>
<dbReference type="Pfam" id="PF13923">
    <property type="entry name" value="zf-C3HC4_2"/>
    <property type="match status" value="1"/>
</dbReference>
<dbReference type="Pfam" id="PF02176">
    <property type="entry name" value="zf-TRAF"/>
    <property type="match status" value="1"/>
</dbReference>
<dbReference type="PIRSF" id="PIRSF015614">
    <property type="entry name" value="TRAF"/>
    <property type="match status" value="1"/>
</dbReference>
<dbReference type="SMART" id="SM00061">
    <property type="entry name" value="MATH"/>
    <property type="match status" value="1"/>
</dbReference>
<dbReference type="SMART" id="SM00184">
    <property type="entry name" value="RING"/>
    <property type="match status" value="1"/>
</dbReference>
<dbReference type="SUPFAM" id="SSF57850">
    <property type="entry name" value="RING/U-box"/>
    <property type="match status" value="1"/>
</dbReference>
<dbReference type="SUPFAM" id="SSF49599">
    <property type="entry name" value="TRAF domain-like"/>
    <property type="match status" value="3"/>
</dbReference>
<dbReference type="PROSITE" id="PS50144">
    <property type="entry name" value="MATH"/>
    <property type="match status" value="1"/>
</dbReference>
<dbReference type="PROSITE" id="PS00518">
    <property type="entry name" value="ZF_RING_1"/>
    <property type="match status" value="1"/>
</dbReference>
<dbReference type="PROSITE" id="PS50089">
    <property type="entry name" value="ZF_RING_2"/>
    <property type="match status" value="1"/>
</dbReference>
<dbReference type="PROSITE" id="PS50145">
    <property type="entry name" value="ZF_TRAF"/>
    <property type="match status" value="2"/>
</dbReference>
<comment type="function">
    <text evidence="2 3">E3 ubiquitin ligase that, together with UBE2N and UBE2V1, mediates the synthesis of 'Lys-63'-linked-polyubiquitin chains conjugated to proteins, such as ECSIT, IKBKG, IRAK1, AKT1 and AKT2. Also mediates ubiquitination of free/unanchored polyubiquitin chain that leads to MAP3K7 activation. Leads to the activation of NF-kappa-B and JUN (By similarity). Seems to also play a role in dendritic cells (DCs) maturation and/or activation (By similarity). Represses c-Myb-mediated transactivation, in B-lymphocytes. Adapter protein that seems to play a role in signal transduction initiated via TNF receptor, IL-1 receptor and IL-17 receptor (By similarity). Regulates osteoclast differentiation by mediating the activation of adapter protein complex 1 (AP-1) and NF-kappa-B, in response to RANK-L stimulation (By similarity). Together with MAP3K8, mediates CD40 signals that activate ERK in B-cells and macrophages, and thus may play a role in the regulation of immunoglobulin production (By similarity). Acts as a regulator of the JNK and NF-kappa-B signaling pathways by initiating assembly of heterotypic 'Lys-63'-/'Lys-48'-linked branched ubiquitin chains that are then recognized by TAB2: TRAF6 catalyzes initial 'Lys-63'-linked-polyubiquitin chains that are then branched via 'Lys-48'-linked polyubiquitin by HUWE1. 'Lys-63'-/'Lys-48'-linked branched ubiquitin chains protect 'Lys-63'-linkages from CYLD deubiquitination. Also participates in the TCR signaling by ubiquitinating LAT (By similarity).</text>
</comment>
<comment type="catalytic activity">
    <reaction evidence="3">
        <text>S-ubiquitinyl-[E2 ubiquitin-conjugating enzyme]-L-cysteine + [acceptor protein]-L-lysine = [E2 ubiquitin-conjugating enzyme]-L-cysteine + N(6)-ubiquitinyl-[acceptor protein]-L-lysine.</text>
        <dbReference type="EC" id="2.3.2.27"/>
    </reaction>
</comment>
<comment type="pathway">
    <text evidence="3">Protein modification; protein ubiquitination.</text>
</comment>
<comment type="subunit">
    <text evidence="2 3">Homotrimer. Homooligomer. N-terminal region is dimeric while C-terminal region is trimeric; maybe providing a mode of oligomerization. Upon IL1B treatment, forms a complex with PELI1, IRAK1, IRAK4 and MYD88; this complex recruits MAP3K7/TAK1, TAB1 and TAB2 to mediate NF-kappa-B activation. Direct binding of SMAD6 to PELI1 prevents the complex formation and hence negatively regulates IL1R-TLR signaling and eventually NF-kappa-B-mediated gene expression. Binds to TNFRSF5/CD40 and TNFRSF11A/RANK. Associates with NGFR, TNFRSF17, IRAK2, IRAK3, RIPK2, MAP3K1, MAP3K5, MAP3K14, CSK, TRAF, TRAF-interacting protein TRIP and TNF receptor associated protein TDP2. Interacts with IL17R. Interacts with SQSTM1 bridging NTRK1 and NGFR. Forms a ternary complex with SQSTM1 and PRKCZ (By similarity). Interacts with PELI2 and PELI3. Binds UBE2V1. Interacts with TAX1BP1; this interaction mediates deubiquitination of TRAF6 and inhibition of NF-kappa-B activation (By similarity). Interacts with ZNF675. Interacts with ARRB1 and ARRB2. Interacts with MAP3K7 and TAB1/MAP3K7IP1; during IL-1 signaling. Interacts with UBE2N. Interacts with TGFBR1, HDAC1 and RANGAP1. Interacts with AKT1, AKT2 and AKT3. Interacts (via TRAF domains) with NUMBL (via C-terminal). Interacts with RBCK1. Interacts with LIMD1 (via LIM domains) (By similarity). Interacts with RSAD2/viperin (By similarity). Interacts (via C-terminus) with EIF2AK2/PKR (via the kinase catalytic domain) (By similarity). Interacts with ZFAND5. Interacts with IL1RL1. Interacts with TRAFD1. Interacts with AJUBA. Interacts with MAVS/IPS1. Interacts (via TRAF domains) with DYNC2I2 (via WD domains). Interacts with IFIT3 (via N-terminus). Interacts with TICAM2. Interacts with CARD14. Interacts with CD40 and MAP3K8; the interaction is required for ERK activation (By similarity). Interacts with TICAM1 and this interaction is enhanced in the presence of WDFY1. Interacts with TANK; this interaction increases in response to DNA damage. Interacts with USP10; this interaction increases in response to DNA damage. Interacts with ZC3H12A; this interaction increases in response to DNA damage and is stimulated by TANK (By similarity). Interacts with WDFY3 (By similarity). Interacts with TRIM13 (By similarity). Interacts with GPS2 (By similarity). Interacts (via C-terminus) with SASH1. Interacts with LRRC19. Interacts with IL17RA and TRAF3IP2. Interacts with TOMM70. Interacts with AMBRA1; interaction is required to mediate 'Lys-63'-linked ubiquitination of ULK1 (By similarity). Interacts with CRBN; this interaction inhibits TLR4-mediated signaling by preventing TRAF6-mediated ubiquitination of ECSIT (By similarity).</text>
</comment>
<comment type="subcellular location">
    <subcellularLocation>
        <location evidence="3">Cytoplasm</location>
    </subcellularLocation>
    <subcellularLocation>
        <location evidence="3">Cytoplasm</location>
        <location evidence="3">Cell cortex</location>
    </subcellularLocation>
    <subcellularLocation>
        <location evidence="3">Nucleus</location>
    </subcellularLocation>
    <subcellularLocation>
        <location evidence="2">Lipid droplet</location>
    </subcellularLocation>
    <text evidence="2">RSAD2/viperin recruits it to the lipid droplet.</text>
</comment>
<comment type="domain">
    <text evidence="3">The coiled coil domain mediates homo- and hetero-oligomerization.</text>
</comment>
<comment type="domain">
    <text evidence="3">The MATH/TRAF domain binds to receptor cytoplasmic domains.</text>
</comment>
<comment type="PTM">
    <text evidence="3">Sumoylated on Lys-125, Lys-143 and Lys-473 with SUMO1.</text>
</comment>
<comment type="PTM">
    <text evidence="2 3">Polyubiquitinated on Lys-125 by TRAF3IP2; after cell stimulation with IL17A (By similarity). Polyubiquitinated on Lys-125; after cell stimulation with IL1B or TGFB. This ligand-induced cell stimulation leads to dimerization/oligomerization of TRAF6 molecules, followed by auto-ubiquitination which involves UBE2N and UBE2V1 and leads to TRAF6 activation. This 'Lys-63' site-specific poly-ubiquitination appears to be associated with the activation of signaling molecules. Endogenous autoubiquitination occurs only for the cytoplasmic form. Deubiquitinated by USP10 in a TANK-dependent manner, leading to the negative regulation of NF-kappa-B signaling upon DNA damage. LRRC19 induces 'Lys-63' ubiquitination (By similarity). Ubiquitinated at Lys-339 by the SCF(FBXL2) complex, leading to its degradation by the proteasome (By similarity).</text>
</comment>
<comment type="similarity">
    <text evidence="8">Belongs to the TNF receptor-associated factor family. A subfamily.</text>
</comment>
<organism>
    <name type="scientific">Bos taurus</name>
    <name type="common">Bovine</name>
    <dbReference type="NCBI Taxonomy" id="9913"/>
    <lineage>
        <taxon>Eukaryota</taxon>
        <taxon>Metazoa</taxon>
        <taxon>Chordata</taxon>
        <taxon>Craniata</taxon>
        <taxon>Vertebrata</taxon>
        <taxon>Euteleostomi</taxon>
        <taxon>Mammalia</taxon>
        <taxon>Eutheria</taxon>
        <taxon>Laurasiatheria</taxon>
        <taxon>Artiodactyla</taxon>
        <taxon>Ruminantia</taxon>
        <taxon>Pecora</taxon>
        <taxon>Bovidae</taxon>
        <taxon>Bovinae</taxon>
        <taxon>Bos</taxon>
    </lineage>
</organism>
<feature type="chain" id="PRO_0000391607" description="TNF receptor-associated factor 6">
    <location>
        <begin position="1"/>
        <end position="542"/>
    </location>
</feature>
<feature type="domain" description="MATH" evidence="5">
    <location>
        <begin position="370"/>
        <end position="519"/>
    </location>
</feature>
<feature type="zinc finger region" description="RING-type; degenerate" evidence="6">
    <location>
        <begin position="71"/>
        <end position="110"/>
    </location>
</feature>
<feature type="zinc finger region" description="TRAF-type 1" evidence="7">
    <location>
        <begin position="151"/>
        <end position="203"/>
    </location>
</feature>
<feature type="zinc finger region" description="TRAF-type 2" evidence="7">
    <location>
        <begin position="204"/>
        <end position="260"/>
    </location>
</feature>
<feature type="region of interest" description="Interaction with TAX1BP1" evidence="1">
    <location>
        <begin position="1"/>
        <end position="374"/>
    </location>
</feature>
<feature type="region of interest" description="Interaction with TANK" evidence="3">
    <location>
        <begin position="375"/>
        <end position="542"/>
    </location>
</feature>
<feature type="coiled-coil region" evidence="4">
    <location>
        <begin position="310"/>
        <end position="368"/>
    </location>
</feature>
<feature type="cross-link" description="Glycyl lysine isopeptide (Lys-Gly) (interchain with G-Cter in SUMO); alternate" evidence="1">
    <location>
        <position position="125"/>
    </location>
</feature>
<feature type="cross-link" description="Glycyl lysine isopeptide (Lys-Gly) (interchain with G-Cter in ubiquitin); alternate" evidence="3">
    <location>
        <position position="125"/>
    </location>
</feature>
<feature type="cross-link" description="Glycyl lysine isopeptide (Lys-Gly) (interchain with G-Cter in SUMO)" evidence="1">
    <location>
        <position position="143"/>
    </location>
</feature>
<feature type="cross-link" description="Glycyl lysine isopeptide (Lys-Gly) (interchain with G-Cter in ubiquitin)" evidence="2">
    <location>
        <position position="339"/>
    </location>
</feature>
<feature type="cross-link" description="Glycyl lysine isopeptide (Lys-Gly) (interchain with G-Cter in SUMO)" evidence="1">
    <location>
        <position position="473"/>
    </location>
</feature>
<gene>
    <name type="primary">TRAF6</name>
</gene>
<reference key="1">
    <citation type="journal article" date="2006" name="Vet. Immunol. Immunopathol.">
        <title>Cloning and radiation hybrid mapping of bovine toll-like receptor-4 (TLR-4) signaling molecules.</title>
        <authorList>
            <person name="Connor E.E."/>
            <person name="Cates E.A."/>
            <person name="Williams J.L."/>
            <person name="Bannerman D.D."/>
        </authorList>
    </citation>
    <scope>NUCLEOTIDE SEQUENCE [MRNA]</scope>
    <source>
        <tissue>Mammary gland</tissue>
    </source>
</reference>
<reference key="2">
    <citation type="submission" date="2006-02" db="EMBL/GenBank/DDBJ databases">
        <title>Identification of signalling molecules involved in bovine TLR signalling.</title>
        <authorList>
            <person name="Werling D."/>
            <person name="Willcocks S."/>
        </authorList>
    </citation>
    <scope>NUCLEOTIDE SEQUENCE [MRNA]</scope>
</reference>
<reference key="3">
    <citation type="submission" date="2005-08" db="EMBL/GenBank/DDBJ databases">
        <authorList>
            <consortium name="NIH - Mammalian Gene Collection (MGC) project"/>
        </authorList>
    </citation>
    <scope>NUCLEOTIDE SEQUENCE [LARGE SCALE MRNA]</scope>
    <source>
        <strain>Crossbred X Angus</strain>
        <tissue>Ileum</tissue>
    </source>
</reference>
<sequence>MSLLHCENSCGSSQSESDCCAAMAASSCGTAAKDDSVSGTASTVTLSSSFMEEIQGYDVEFDPPLESKYECPICLMALREAVQTPCGHRFCKACIIKSIRDAGHKCPVDNEILLENQLFPDNFAKREILSLMVKCPNEGCLHKMELRHLEEHQAHCEFALMSCPQCQRPFQKCHLNIHILKECPRRQVPCENCAVSMAFEDKEIHEQNCPLANVICEYCNTMLIREQMPNHYDLDCPTAPVPCTFSAFGCHEKMQRNHLARHLQENTQSHMRMMAQAVQTLSLAVAPVPQCTMPLYDSVPPTRPSSGRHSEVHNFQETIQQLEGRLVRQDHQIRELTAKMETQSMYVNELKRTIRTLEDKVAEIEAQQCNGIYIWKIGNFGMHLKSQEEEKPVVIHSPGFYTGKPGYKLCMRLHLQLPSAQRCANYISLFVHTMQGEYDSHLPWPFQGTIRLTILDQSEAAVRQNHEEIMDAKPELLAFQRPTIPRNPKGFGYVTFMHLEALRQRTFIKDDTLLVRCEVSTRFDMGSLRREGFQPRSTDSGI</sequence>
<proteinExistence type="evidence at transcript level"/>